<organism>
    <name type="scientific">Pyrobaculum aerophilum (strain ATCC 51768 / DSM 7523 / JCM 9630 / CIP 104966 / NBRC 100827 / IM2)</name>
    <dbReference type="NCBI Taxonomy" id="178306"/>
    <lineage>
        <taxon>Archaea</taxon>
        <taxon>Thermoproteota</taxon>
        <taxon>Thermoprotei</taxon>
        <taxon>Thermoproteales</taxon>
        <taxon>Thermoproteaceae</taxon>
        <taxon>Pyrobaculum</taxon>
    </lineage>
</organism>
<comment type="function">
    <text evidence="1">Component of the proteasome core, a large protease complex with broad specificity involved in protein degradation.</text>
</comment>
<comment type="catalytic activity">
    <reaction evidence="1">
        <text>Cleavage of peptide bonds with very broad specificity.</text>
        <dbReference type="EC" id="3.4.25.1"/>
    </reaction>
</comment>
<comment type="activity regulation">
    <text evidence="1">The formation of the proteasomal ATPase PAN-20S proteasome complex, via the docking of the C-termini of PAN into the intersubunit pockets in the alpha-rings, triggers opening of the gate for substrate entry. Interconversion between the open-gate and close-gate conformations leads to a dynamic regulation of the 20S proteasome proteolysis activity.</text>
</comment>
<comment type="subunit">
    <text evidence="1">The 20S proteasome core is composed of 14 alpha and 14 beta subunits that assemble into four stacked heptameric rings, resulting in a barrel-shaped structure. The two inner rings, each composed of seven catalytic beta subunits, are sandwiched by two outer rings, each composed of seven alpha subunits. The catalytic chamber with the active sites is on the inside of the barrel. Has a gated structure, the ends of the cylinder being occluded by the N-termini of the alpha-subunits. Is capped at one or both ends by the proteasome regulatory ATPase, PAN.</text>
</comment>
<comment type="subcellular location">
    <subcellularLocation>
        <location evidence="1">Cytoplasm</location>
    </subcellularLocation>
</comment>
<comment type="similarity">
    <text evidence="1">Belongs to the peptidase T1B family.</text>
</comment>
<protein>
    <recommendedName>
        <fullName evidence="1">Proteasome subunit beta 1</fullName>
        <ecNumber evidence="1">3.4.25.1</ecNumber>
    </recommendedName>
    <alternativeName>
        <fullName evidence="1">20S proteasome beta subunit 1</fullName>
    </alternativeName>
    <alternativeName>
        <fullName evidence="1">Proteasome core protein PsmB 1</fullName>
    </alternativeName>
</protein>
<gene>
    <name evidence="1" type="primary">psmB1</name>
    <name type="ordered locus">PAE0807</name>
</gene>
<dbReference type="EC" id="3.4.25.1" evidence="1"/>
<dbReference type="EMBL" id="AE009441">
    <property type="protein sequence ID" value="AAL63041.1"/>
    <property type="molecule type" value="Genomic_DNA"/>
</dbReference>
<dbReference type="RefSeq" id="WP_011007513.1">
    <property type="nucleotide sequence ID" value="NC_003364.1"/>
</dbReference>
<dbReference type="SMR" id="Q8ZYF2"/>
<dbReference type="FunCoup" id="Q8ZYF2">
    <property type="interactions" value="191"/>
</dbReference>
<dbReference type="STRING" id="178306.PAE0807"/>
<dbReference type="MEROPS" id="T01.002"/>
<dbReference type="EnsemblBacteria" id="AAL63041">
    <property type="protein sequence ID" value="AAL63041"/>
    <property type="gene ID" value="PAE0807"/>
</dbReference>
<dbReference type="GeneID" id="1465270"/>
<dbReference type="KEGG" id="pai:PAE0807"/>
<dbReference type="PATRIC" id="fig|178306.9.peg.590"/>
<dbReference type="eggNOG" id="arCOG00970">
    <property type="taxonomic scope" value="Archaea"/>
</dbReference>
<dbReference type="HOGENOM" id="CLU_035750_7_2_2"/>
<dbReference type="InParanoid" id="Q8ZYF2"/>
<dbReference type="Proteomes" id="UP000002439">
    <property type="component" value="Chromosome"/>
</dbReference>
<dbReference type="GO" id="GO:0005829">
    <property type="term" value="C:cytosol"/>
    <property type="evidence" value="ECO:0000318"/>
    <property type="project" value="GO_Central"/>
</dbReference>
<dbReference type="GO" id="GO:0019774">
    <property type="term" value="C:proteasome core complex, beta-subunit complex"/>
    <property type="evidence" value="ECO:0000318"/>
    <property type="project" value="GO_Central"/>
</dbReference>
<dbReference type="GO" id="GO:0004175">
    <property type="term" value="F:endopeptidase activity"/>
    <property type="evidence" value="ECO:0000318"/>
    <property type="project" value="GO_Central"/>
</dbReference>
<dbReference type="GO" id="GO:0004298">
    <property type="term" value="F:threonine-type endopeptidase activity"/>
    <property type="evidence" value="ECO:0007669"/>
    <property type="project" value="UniProtKB-UniRule"/>
</dbReference>
<dbReference type="GO" id="GO:0043161">
    <property type="term" value="P:proteasome-mediated ubiquitin-dependent protein catabolic process"/>
    <property type="evidence" value="ECO:0000318"/>
    <property type="project" value="GO_Central"/>
</dbReference>
<dbReference type="CDD" id="cd03764">
    <property type="entry name" value="proteasome_beta_archeal"/>
    <property type="match status" value="1"/>
</dbReference>
<dbReference type="FunFam" id="3.60.20.10:FF:000049">
    <property type="entry name" value="Proteasome subunit beta"/>
    <property type="match status" value="1"/>
</dbReference>
<dbReference type="Gene3D" id="3.60.20.10">
    <property type="entry name" value="Glutamine Phosphoribosylpyrophosphate, subunit 1, domain 1"/>
    <property type="match status" value="1"/>
</dbReference>
<dbReference type="HAMAP" id="MF_02113_A">
    <property type="entry name" value="Proteasome_B_A"/>
    <property type="match status" value="1"/>
</dbReference>
<dbReference type="InterPro" id="IPR029055">
    <property type="entry name" value="Ntn_hydrolases_N"/>
</dbReference>
<dbReference type="InterPro" id="IPR019983">
    <property type="entry name" value="Pept_T1A_Psome_bsu_arc"/>
</dbReference>
<dbReference type="InterPro" id="IPR000243">
    <property type="entry name" value="Pept_T1A_subB"/>
</dbReference>
<dbReference type="InterPro" id="IPR016050">
    <property type="entry name" value="Proteasome_bsu_CS"/>
</dbReference>
<dbReference type="InterPro" id="IPR001353">
    <property type="entry name" value="Proteasome_sua/b"/>
</dbReference>
<dbReference type="InterPro" id="IPR023333">
    <property type="entry name" value="Proteasome_suB-type"/>
</dbReference>
<dbReference type="PANTHER" id="PTHR32194:SF0">
    <property type="entry name" value="ATP-DEPENDENT PROTEASE SUBUNIT HSLV"/>
    <property type="match status" value="1"/>
</dbReference>
<dbReference type="PANTHER" id="PTHR32194">
    <property type="entry name" value="METALLOPROTEASE TLDD"/>
    <property type="match status" value="1"/>
</dbReference>
<dbReference type="Pfam" id="PF00227">
    <property type="entry name" value="Proteasome"/>
    <property type="match status" value="1"/>
</dbReference>
<dbReference type="PRINTS" id="PR00141">
    <property type="entry name" value="PROTEASOME"/>
</dbReference>
<dbReference type="SUPFAM" id="SSF56235">
    <property type="entry name" value="N-terminal nucleophile aminohydrolases (Ntn hydrolases)"/>
    <property type="match status" value="1"/>
</dbReference>
<dbReference type="PROSITE" id="PS00854">
    <property type="entry name" value="PROTEASOME_BETA_1"/>
    <property type="match status" value="1"/>
</dbReference>
<dbReference type="PROSITE" id="PS51476">
    <property type="entry name" value="PROTEASOME_BETA_2"/>
    <property type="match status" value="1"/>
</dbReference>
<feature type="propeptide" id="PRO_0000397394" description="Removed in mature form; by autocatalysis" evidence="1">
    <location>
        <position position="1"/>
    </location>
</feature>
<feature type="chain" id="PRO_0000397395" description="Proteasome subunit beta 1">
    <location>
        <begin position="2"/>
        <end position="202"/>
    </location>
</feature>
<feature type="active site" description="Nucleophile" evidence="1">
    <location>
        <position position="2"/>
    </location>
</feature>
<keyword id="KW-0068">Autocatalytic cleavage</keyword>
<keyword id="KW-0963">Cytoplasm</keyword>
<keyword id="KW-0378">Hydrolase</keyword>
<keyword id="KW-0645">Protease</keyword>
<keyword id="KW-0647">Proteasome</keyword>
<keyword id="KW-1185">Reference proteome</keyword>
<keyword id="KW-0888">Threonine protease</keyword>
<keyword id="KW-0865">Zymogen</keyword>
<proteinExistence type="inferred from homology"/>
<reference key="1">
    <citation type="journal article" date="2002" name="Proc. Natl. Acad. Sci. U.S.A.">
        <title>Genome sequence of the hyperthermophilic crenarchaeon Pyrobaculum aerophilum.</title>
        <authorList>
            <person name="Fitz-Gibbon S.T."/>
            <person name="Ladner H."/>
            <person name="Kim U.-J."/>
            <person name="Stetter K.O."/>
            <person name="Simon M.I."/>
            <person name="Miller J.H."/>
        </authorList>
    </citation>
    <scope>NUCLEOTIDE SEQUENCE [LARGE SCALE GENOMIC DNA]</scope>
    <source>
        <strain>ATCC 51768 / DSM 7523 / JCM 9630 / CIP 104966 / NBRC 100827 / IM2</strain>
    </source>
</reference>
<evidence type="ECO:0000255" key="1">
    <source>
        <dbReference type="HAMAP-Rule" id="MF_02113"/>
    </source>
</evidence>
<sequence>MTTTVGIAVKDGVVLATDKRVTAGYYIAHKRGEKIWKIDDHVAATMSGGVADLQSVLSFLTLRAHEYKIEYKRPIPISALVNYMSLILFYSRPYIYIVHSIIGGVDEEEGAVLYMVDWLGTVTKEKYIATGSGSPYAKGALEVGYREDMTLEDAVDLAIKAVKAAIRNDPGSGEGIDVVVITRKEGFKRVFTTQQKLVLPSL</sequence>
<accession>Q8ZYF2</accession>
<name>PSB1_PYRAE</name>